<dbReference type="EC" id="3.6.5.-" evidence="1"/>
<dbReference type="EMBL" id="BC012273">
    <property type="protein sequence ID" value="AAH12273.1"/>
    <property type="molecule type" value="mRNA"/>
</dbReference>
<dbReference type="CCDS" id="CCDS39032.1"/>
<dbReference type="RefSeq" id="NP_444305.2">
    <property type="nucleotide sequence ID" value="NM_053075.3"/>
</dbReference>
<dbReference type="PDB" id="4O25">
    <property type="method" value="X-ray"/>
    <property type="resolution" value="2.20 A"/>
    <property type="chains" value="A/B=1-169"/>
</dbReference>
<dbReference type="PDB" id="4O2L">
    <property type="method" value="X-ray"/>
    <property type="resolution" value="2.40 A"/>
    <property type="chains" value="A/B=1-169"/>
</dbReference>
<dbReference type="PDB" id="4O2R">
    <property type="method" value="X-ray"/>
    <property type="resolution" value="2.25 A"/>
    <property type="chains" value="A/B=1-169"/>
</dbReference>
<dbReference type="PDBsum" id="4O25"/>
<dbReference type="PDBsum" id="4O2L"/>
<dbReference type="PDBsum" id="4O2R"/>
<dbReference type="BMRB" id="Q921J2"/>
<dbReference type="SMR" id="Q921J2"/>
<dbReference type="BioGRID" id="202889">
    <property type="interactions" value="75"/>
</dbReference>
<dbReference type="FunCoup" id="Q921J2">
    <property type="interactions" value="2748"/>
</dbReference>
<dbReference type="IntAct" id="Q921J2">
    <property type="interactions" value="5"/>
</dbReference>
<dbReference type="MINT" id="Q921J2"/>
<dbReference type="STRING" id="10090.ENSMUSP00000030787"/>
<dbReference type="GlyGen" id="Q921J2">
    <property type="glycosylation" value="1 site, 1 O-linked glycan (1 site)"/>
</dbReference>
<dbReference type="iPTMnet" id="Q921J2"/>
<dbReference type="PhosphoSitePlus" id="Q921J2"/>
<dbReference type="SwissPalm" id="Q921J2"/>
<dbReference type="PaxDb" id="10090-ENSMUSP00000030787"/>
<dbReference type="ProteomicsDB" id="255328"/>
<dbReference type="Pumba" id="Q921J2"/>
<dbReference type="Antibodypedia" id="18765">
    <property type="antibodies" value="481 antibodies from 40 providers"/>
</dbReference>
<dbReference type="DNASU" id="19744"/>
<dbReference type="Ensembl" id="ENSMUST00000030787.9">
    <property type="protein sequence ID" value="ENSMUSP00000030787.9"/>
    <property type="gene ID" value="ENSMUSG00000028945.10"/>
</dbReference>
<dbReference type="GeneID" id="19744"/>
<dbReference type="KEGG" id="mmu:19744"/>
<dbReference type="UCSC" id="uc008wsj.1">
    <property type="organism name" value="mouse"/>
</dbReference>
<dbReference type="AGR" id="MGI:97912"/>
<dbReference type="CTD" id="6009"/>
<dbReference type="MGI" id="MGI:97912">
    <property type="gene designation" value="Rheb"/>
</dbReference>
<dbReference type="VEuPathDB" id="HostDB:ENSMUSG00000028945"/>
<dbReference type="eggNOG" id="KOG0395">
    <property type="taxonomic scope" value="Eukaryota"/>
</dbReference>
<dbReference type="GeneTree" id="ENSGT00940000159945"/>
<dbReference type="HOGENOM" id="CLU_041217_9_8_1"/>
<dbReference type="InParanoid" id="Q921J2"/>
<dbReference type="OMA" id="SARHNEN"/>
<dbReference type="OrthoDB" id="25818at2759"/>
<dbReference type="PhylomeDB" id="Q921J2"/>
<dbReference type="TreeFam" id="TF314986"/>
<dbReference type="Reactome" id="R-MMU-1632852">
    <property type="pathway name" value="Macroautophagy"/>
</dbReference>
<dbReference type="Reactome" id="R-MMU-165159">
    <property type="pathway name" value="MTOR signalling"/>
</dbReference>
<dbReference type="Reactome" id="R-MMU-166208">
    <property type="pathway name" value="mTORC1-mediated signalling"/>
</dbReference>
<dbReference type="Reactome" id="R-MMU-380972">
    <property type="pathway name" value="Energy dependent regulation of mTOR by LKB1-AMPK"/>
</dbReference>
<dbReference type="Reactome" id="R-MMU-5628897">
    <property type="pathway name" value="TP53 Regulates Metabolic Genes"/>
</dbReference>
<dbReference type="Reactome" id="R-MMU-8943724">
    <property type="pathway name" value="Regulation of PTEN gene transcription"/>
</dbReference>
<dbReference type="Reactome" id="R-MMU-9639288">
    <property type="pathway name" value="Amino acids regulate mTORC1"/>
</dbReference>
<dbReference type="BioGRID-ORCS" id="19744">
    <property type="hits" value="16 hits in 80 CRISPR screens"/>
</dbReference>
<dbReference type="ChiTaRS" id="Rheb">
    <property type="organism name" value="mouse"/>
</dbReference>
<dbReference type="EvolutionaryTrace" id="Q921J2"/>
<dbReference type="PRO" id="PR:Q921J2"/>
<dbReference type="Proteomes" id="UP000000589">
    <property type="component" value="Chromosome 5"/>
</dbReference>
<dbReference type="RNAct" id="Q921J2">
    <property type="molecule type" value="protein"/>
</dbReference>
<dbReference type="Bgee" id="ENSMUSG00000028945">
    <property type="expression patterns" value="Expressed in ear vesicle and 252 other cell types or tissues"/>
</dbReference>
<dbReference type="ExpressionAtlas" id="Q921J2">
    <property type="expression patterns" value="baseline and differential"/>
</dbReference>
<dbReference type="GO" id="GO:0005829">
    <property type="term" value="C:cytosol"/>
    <property type="evidence" value="ECO:0007669"/>
    <property type="project" value="UniProtKB-SubCell"/>
</dbReference>
<dbReference type="GO" id="GO:0012505">
    <property type="term" value="C:endomembrane system"/>
    <property type="evidence" value="ECO:0000314"/>
    <property type="project" value="UniProtKB"/>
</dbReference>
<dbReference type="GO" id="GO:0005789">
    <property type="term" value="C:endoplasmic reticulum membrane"/>
    <property type="evidence" value="ECO:0007669"/>
    <property type="project" value="UniProtKB-SubCell"/>
</dbReference>
<dbReference type="GO" id="GO:0000139">
    <property type="term" value="C:Golgi membrane"/>
    <property type="evidence" value="ECO:0000314"/>
    <property type="project" value="UniProtKB"/>
</dbReference>
<dbReference type="GO" id="GO:0005765">
    <property type="term" value="C:lysosomal membrane"/>
    <property type="evidence" value="ECO:0000250"/>
    <property type="project" value="UniProtKB"/>
</dbReference>
<dbReference type="GO" id="GO:0014069">
    <property type="term" value="C:postsynaptic density"/>
    <property type="evidence" value="ECO:0007669"/>
    <property type="project" value="Ensembl"/>
</dbReference>
<dbReference type="GO" id="GO:0005681">
    <property type="term" value="C:spliceosomal complex"/>
    <property type="evidence" value="ECO:0000314"/>
    <property type="project" value="MGI"/>
</dbReference>
<dbReference type="GO" id="GO:0045202">
    <property type="term" value="C:synapse"/>
    <property type="evidence" value="ECO:0000314"/>
    <property type="project" value="SynGO"/>
</dbReference>
<dbReference type="GO" id="GO:0019003">
    <property type="term" value="F:GDP binding"/>
    <property type="evidence" value="ECO:0007669"/>
    <property type="project" value="Ensembl"/>
</dbReference>
<dbReference type="GO" id="GO:0005525">
    <property type="term" value="F:GTP binding"/>
    <property type="evidence" value="ECO:0000314"/>
    <property type="project" value="UniProtKB"/>
</dbReference>
<dbReference type="GO" id="GO:0003924">
    <property type="term" value="F:GTPase activity"/>
    <property type="evidence" value="ECO:0000250"/>
    <property type="project" value="UniProtKB"/>
</dbReference>
<dbReference type="GO" id="GO:0000287">
    <property type="term" value="F:magnesium ion binding"/>
    <property type="evidence" value="ECO:0007669"/>
    <property type="project" value="Ensembl"/>
</dbReference>
<dbReference type="GO" id="GO:0030295">
    <property type="term" value="F:protein kinase activator activity"/>
    <property type="evidence" value="ECO:0000250"/>
    <property type="project" value="UniProtKB"/>
</dbReference>
<dbReference type="GO" id="GO:0019901">
    <property type="term" value="F:protein kinase binding"/>
    <property type="evidence" value="ECO:0000353"/>
    <property type="project" value="UniProtKB"/>
</dbReference>
<dbReference type="GO" id="GO:0043539">
    <property type="term" value="F:protein serine/threonine kinase activator activity"/>
    <property type="evidence" value="ECO:0007669"/>
    <property type="project" value="Ensembl"/>
</dbReference>
<dbReference type="GO" id="GO:0031669">
    <property type="term" value="P:cellular response to nutrient levels"/>
    <property type="evidence" value="ECO:0007669"/>
    <property type="project" value="Ensembl"/>
</dbReference>
<dbReference type="GO" id="GO:0120163">
    <property type="term" value="P:negative regulation of cold-induced thermogenesis"/>
    <property type="evidence" value="ECO:0000315"/>
    <property type="project" value="YuBioLab"/>
</dbReference>
<dbReference type="GO" id="GO:0048709">
    <property type="term" value="P:oligodendrocyte differentiation"/>
    <property type="evidence" value="ECO:0000315"/>
    <property type="project" value="MGI"/>
</dbReference>
<dbReference type="GO" id="GO:0048714">
    <property type="term" value="P:positive regulation of oligodendrocyte differentiation"/>
    <property type="evidence" value="ECO:0000315"/>
    <property type="project" value="MGI"/>
</dbReference>
<dbReference type="GO" id="GO:0032008">
    <property type="term" value="P:positive regulation of TOR signaling"/>
    <property type="evidence" value="ECO:0000314"/>
    <property type="project" value="UniProtKB"/>
</dbReference>
<dbReference type="GO" id="GO:1904263">
    <property type="term" value="P:positive regulation of TORC1 signaling"/>
    <property type="evidence" value="ECO:0000314"/>
    <property type="project" value="UniProtKB"/>
</dbReference>
<dbReference type="GO" id="GO:0032006">
    <property type="term" value="P:regulation of TOR signaling"/>
    <property type="evidence" value="ECO:0000315"/>
    <property type="project" value="CACAO"/>
</dbReference>
<dbReference type="GO" id="GO:2000074">
    <property type="term" value="P:regulation of type B pancreatic cell development"/>
    <property type="evidence" value="ECO:0007669"/>
    <property type="project" value="Ensembl"/>
</dbReference>
<dbReference type="GO" id="GO:0009615">
    <property type="term" value="P:response to virus"/>
    <property type="evidence" value="ECO:0000314"/>
    <property type="project" value="MGI"/>
</dbReference>
<dbReference type="GO" id="GO:0007165">
    <property type="term" value="P:signal transduction"/>
    <property type="evidence" value="ECO:0007669"/>
    <property type="project" value="InterPro"/>
</dbReference>
<dbReference type="CDD" id="cd04137">
    <property type="entry name" value="RheB"/>
    <property type="match status" value="1"/>
</dbReference>
<dbReference type="FunFam" id="3.40.50.300:FF:000273">
    <property type="entry name" value="GTP-binding protein Rheb homolog"/>
    <property type="match status" value="1"/>
</dbReference>
<dbReference type="Gene3D" id="3.40.50.300">
    <property type="entry name" value="P-loop containing nucleotide triphosphate hydrolases"/>
    <property type="match status" value="1"/>
</dbReference>
<dbReference type="InterPro" id="IPR027417">
    <property type="entry name" value="P-loop_NTPase"/>
</dbReference>
<dbReference type="InterPro" id="IPR005225">
    <property type="entry name" value="Small_GTP-bd"/>
</dbReference>
<dbReference type="InterPro" id="IPR001806">
    <property type="entry name" value="Small_GTPase"/>
</dbReference>
<dbReference type="InterPro" id="IPR020849">
    <property type="entry name" value="Small_GTPase_Ras-type"/>
</dbReference>
<dbReference type="NCBIfam" id="TIGR00231">
    <property type="entry name" value="small_GTP"/>
    <property type="match status" value="1"/>
</dbReference>
<dbReference type="PANTHER" id="PTHR24070">
    <property type="entry name" value="RAS, DI-RAS, AND RHEB FAMILY MEMBERS OF SMALL GTPASE SUPERFAMILY"/>
    <property type="match status" value="1"/>
</dbReference>
<dbReference type="Pfam" id="PF00071">
    <property type="entry name" value="Ras"/>
    <property type="match status" value="1"/>
</dbReference>
<dbReference type="PRINTS" id="PR00449">
    <property type="entry name" value="RASTRNSFRMNG"/>
</dbReference>
<dbReference type="SMART" id="SM00175">
    <property type="entry name" value="RAB"/>
    <property type="match status" value="1"/>
</dbReference>
<dbReference type="SMART" id="SM00173">
    <property type="entry name" value="RAS"/>
    <property type="match status" value="1"/>
</dbReference>
<dbReference type="SMART" id="SM00174">
    <property type="entry name" value="RHO"/>
    <property type="match status" value="1"/>
</dbReference>
<dbReference type="SUPFAM" id="SSF52540">
    <property type="entry name" value="P-loop containing nucleoside triphosphate hydrolases"/>
    <property type="match status" value="1"/>
</dbReference>
<dbReference type="PROSITE" id="PS51421">
    <property type="entry name" value="RAS"/>
    <property type="match status" value="1"/>
</dbReference>
<protein>
    <recommendedName>
        <fullName>GTP-binding protein Rheb</fullName>
        <ecNumber evidence="1">3.6.5.-</ecNumber>
    </recommendedName>
    <alternativeName>
        <fullName>Ras homolog enriched in brain</fullName>
    </alternativeName>
</protein>
<accession>Q921J2</accession>
<evidence type="ECO:0000250" key="1">
    <source>
        <dbReference type="UniProtKB" id="Q15382"/>
    </source>
</evidence>
<evidence type="ECO:0000269" key="2">
    <source>
    </source>
</evidence>
<evidence type="ECO:0000269" key="3">
    <source>
    </source>
</evidence>
<evidence type="ECO:0000269" key="4">
    <source>
    </source>
</evidence>
<evidence type="ECO:0000269" key="5">
    <source>
    </source>
</evidence>
<evidence type="ECO:0000269" key="6">
    <source>
    </source>
</evidence>
<evidence type="ECO:0000303" key="7">
    <source>
    </source>
</evidence>
<evidence type="ECO:0000305" key="8"/>
<evidence type="ECO:0000312" key="9">
    <source>
        <dbReference type="MGI" id="MGI:97912"/>
    </source>
</evidence>
<evidence type="ECO:0007744" key="10">
    <source>
        <dbReference type="PDB" id="4O25"/>
    </source>
</evidence>
<evidence type="ECO:0007744" key="11">
    <source>
        <dbReference type="PDB" id="4O2L"/>
    </source>
</evidence>
<evidence type="ECO:0007744" key="12">
    <source>
        <dbReference type="PDB" id="4O2R"/>
    </source>
</evidence>
<evidence type="ECO:0007829" key="13">
    <source>
        <dbReference type="PDB" id="4O25"/>
    </source>
</evidence>
<name>RHEB_MOUSE</name>
<feature type="chain" id="PRO_0000082709" description="GTP-binding protein Rheb">
    <location>
        <begin position="1"/>
        <end position="181"/>
    </location>
</feature>
<feature type="propeptide" id="PRO_0000281366" description="Removed in mature form" evidence="1">
    <location>
        <begin position="182"/>
        <end position="184"/>
    </location>
</feature>
<feature type="short sequence motif" description="Effector region">
    <location>
        <begin position="35"/>
        <end position="43"/>
    </location>
</feature>
<feature type="binding site" evidence="6 12">
    <location>
        <position position="16"/>
    </location>
    <ligand>
        <name>GDP</name>
        <dbReference type="ChEBI" id="CHEBI:58189"/>
    </ligand>
</feature>
<feature type="binding site" evidence="6 10 11">
    <location>
        <position position="16"/>
    </location>
    <ligand>
        <name>GTP</name>
        <dbReference type="ChEBI" id="CHEBI:37565"/>
    </ligand>
</feature>
<feature type="binding site" evidence="6 12">
    <location>
        <position position="17"/>
    </location>
    <ligand>
        <name>GDP</name>
        <dbReference type="ChEBI" id="CHEBI:58189"/>
    </ligand>
</feature>
<feature type="binding site" evidence="6 10 11">
    <location>
        <position position="17"/>
    </location>
    <ligand>
        <name>GTP</name>
        <dbReference type="ChEBI" id="CHEBI:37565"/>
    </ligand>
</feature>
<feature type="binding site" evidence="6 12">
    <location>
        <position position="18"/>
    </location>
    <ligand>
        <name>GDP</name>
        <dbReference type="ChEBI" id="CHEBI:58189"/>
    </ligand>
</feature>
<feature type="binding site" evidence="6 10 11">
    <location>
        <position position="18"/>
    </location>
    <ligand>
        <name>GTP</name>
        <dbReference type="ChEBI" id="CHEBI:37565"/>
    </ligand>
</feature>
<feature type="binding site" evidence="6 12">
    <location>
        <position position="19"/>
    </location>
    <ligand>
        <name>GDP</name>
        <dbReference type="ChEBI" id="CHEBI:58189"/>
    </ligand>
</feature>
<feature type="binding site" evidence="6 10 11">
    <location>
        <position position="19"/>
    </location>
    <ligand>
        <name>GTP</name>
        <dbReference type="ChEBI" id="CHEBI:37565"/>
    </ligand>
</feature>
<feature type="binding site" evidence="6 12">
    <location>
        <position position="20"/>
    </location>
    <ligand>
        <name>GDP</name>
        <dbReference type="ChEBI" id="CHEBI:58189"/>
    </ligand>
</feature>
<feature type="binding site" evidence="6 10 11">
    <location>
        <position position="20"/>
    </location>
    <ligand>
        <name>GTP</name>
        <dbReference type="ChEBI" id="CHEBI:37565"/>
    </ligand>
</feature>
<feature type="binding site" evidence="6">
    <location>
        <position position="20"/>
    </location>
    <ligand>
        <name>Mg(2+)</name>
        <dbReference type="ChEBI" id="CHEBI:18420"/>
    </ligand>
</feature>
<feature type="binding site" evidence="6 12">
    <location>
        <position position="21"/>
    </location>
    <ligand>
        <name>GDP</name>
        <dbReference type="ChEBI" id="CHEBI:58189"/>
    </ligand>
</feature>
<feature type="binding site" evidence="6 10 11">
    <location>
        <position position="21"/>
    </location>
    <ligand>
        <name>GTP</name>
        <dbReference type="ChEBI" id="CHEBI:37565"/>
    </ligand>
</feature>
<feature type="binding site" evidence="6 12">
    <location>
        <position position="32"/>
    </location>
    <ligand>
        <name>GDP</name>
        <dbReference type="ChEBI" id="CHEBI:58189"/>
    </ligand>
</feature>
<feature type="binding site" evidence="6 10 11">
    <location>
        <position position="32"/>
    </location>
    <ligand>
        <name>GTP</name>
        <dbReference type="ChEBI" id="CHEBI:37565"/>
    </ligand>
</feature>
<feature type="binding site" evidence="6 12">
    <location>
        <position position="33"/>
    </location>
    <ligand>
        <name>GDP</name>
        <dbReference type="ChEBI" id="CHEBI:58189"/>
    </ligand>
</feature>
<feature type="binding site" evidence="6 10 11">
    <location>
        <position position="33"/>
    </location>
    <ligand>
        <name>GTP</name>
        <dbReference type="ChEBI" id="CHEBI:37565"/>
    </ligand>
</feature>
<feature type="binding site" evidence="6 10 11">
    <location>
        <position position="35"/>
    </location>
    <ligand>
        <name>GTP</name>
        <dbReference type="ChEBI" id="CHEBI:37565"/>
    </ligand>
</feature>
<feature type="binding site" evidence="6 10 11">
    <location>
        <position position="37"/>
    </location>
    <ligand>
        <name>GTP</name>
        <dbReference type="ChEBI" id="CHEBI:37565"/>
    </ligand>
</feature>
<feature type="binding site" evidence="6 10 11">
    <location>
        <position position="38"/>
    </location>
    <ligand>
        <name>GTP</name>
        <dbReference type="ChEBI" id="CHEBI:37565"/>
    </ligand>
</feature>
<feature type="binding site" evidence="1">
    <location>
        <position position="38"/>
    </location>
    <ligand>
        <name>Mg(2+)</name>
        <dbReference type="ChEBI" id="CHEBI:18420"/>
    </ligand>
</feature>
<feature type="binding site" evidence="6 10">
    <location>
        <position position="63"/>
    </location>
    <ligand>
        <name>GTP</name>
        <dbReference type="ChEBI" id="CHEBI:37565"/>
    </ligand>
</feature>
<feature type="binding site" evidence="6 12">
    <location>
        <position position="119"/>
    </location>
    <ligand>
        <name>GDP</name>
        <dbReference type="ChEBI" id="CHEBI:58189"/>
    </ligand>
</feature>
<feature type="binding site" evidence="6 10 11">
    <location>
        <position position="119"/>
    </location>
    <ligand>
        <name>GTP</name>
        <dbReference type="ChEBI" id="CHEBI:37565"/>
    </ligand>
</feature>
<feature type="binding site" evidence="6 10">
    <location>
        <position position="120"/>
    </location>
    <ligand>
        <name>GTP</name>
        <dbReference type="ChEBI" id="CHEBI:37565"/>
    </ligand>
</feature>
<feature type="binding site" evidence="6 12">
    <location>
        <position position="122"/>
    </location>
    <ligand>
        <name>GDP</name>
        <dbReference type="ChEBI" id="CHEBI:58189"/>
    </ligand>
</feature>
<feature type="binding site" evidence="6 10 11">
    <location>
        <position position="122"/>
    </location>
    <ligand>
        <name>GTP</name>
        <dbReference type="ChEBI" id="CHEBI:37565"/>
    </ligand>
</feature>
<feature type="binding site" evidence="6 12">
    <location>
        <position position="150"/>
    </location>
    <ligand>
        <name>GDP</name>
        <dbReference type="ChEBI" id="CHEBI:58189"/>
    </ligand>
</feature>
<feature type="binding site" evidence="6 10 11">
    <location>
        <position position="150"/>
    </location>
    <ligand>
        <name>GTP</name>
        <dbReference type="ChEBI" id="CHEBI:37565"/>
    </ligand>
</feature>
<feature type="site" description="Important for autoinhibition of GTPase activity" evidence="1">
    <location>
        <position position="35"/>
    </location>
</feature>
<feature type="modified residue" description="Phosphoserine; by MAPKAPK5" evidence="5">
    <location>
        <position position="130"/>
    </location>
</feature>
<feature type="modified residue" description="Cysteine methyl ester" evidence="3">
    <location>
        <position position="181"/>
    </location>
</feature>
<feature type="lipid moiety-binding region" description="S-farnesyl cysteine" evidence="3">
    <location>
        <position position="181"/>
    </location>
</feature>
<feature type="cross-link" description="Glycyl lysine isopeptide (Lys-Gly) (interchain with G-Cter in ubiquitin)" evidence="1">
    <location>
        <position position="8"/>
    </location>
</feature>
<feature type="mutagenesis site" description="Impairs GTPase activity and increases stimulation of the protein kinase activity of mTORC1." evidence="6">
    <original>G</original>
    <variation>A</variation>
    <location>
        <position position="63"/>
    </location>
</feature>
<feature type="mutagenesis site" description="Increased affinity for GTP." evidence="3">
    <original>Q</original>
    <variation>L</variation>
    <location>
        <position position="64"/>
    </location>
</feature>
<feature type="mutagenesis site" description="Abolishes phosphorylation by MAPKAPK5 and impairs GTP-binding." evidence="5">
    <original>S</original>
    <variation>A</variation>
    <location>
        <position position="130"/>
    </location>
</feature>
<feature type="mutagenesis site" description="Abolished farnesylation, impairing localization to endomembrane system." evidence="3">
    <location>
        <position position="180"/>
    </location>
</feature>
<feature type="mutagenesis site" description="Abolished farnesylation, impairing localization to endomembrane system." evidence="3">
    <original>C</original>
    <variation>S</variation>
    <location>
        <position position="181"/>
    </location>
</feature>
<feature type="mutagenesis site" description="Impaired localization to endomembrane system." evidence="3">
    <original>M</original>
    <variation>L</variation>
    <location>
        <position position="184"/>
    </location>
</feature>
<feature type="strand" evidence="13">
    <location>
        <begin position="5"/>
        <end position="14"/>
    </location>
</feature>
<feature type="helix" evidence="13">
    <location>
        <begin position="19"/>
        <end position="28"/>
    </location>
</feature>
<feature type="strand" evidence="13">
    <location>
        <begin position="41"/>
        <end position="49"/>
    </location>
</feature>
<feature type="strand" evidence="13">
    <location>
        <begin position="52"/>
        <end position="60"/>
    </location>
</feature>
<feature type="strand" evidence="13">
    <location>
        <begin position="80"/>
        <end position="86"/>
    </location>
</feature>
<feature type="helix" evidence="13">
    <location>
        <begin position="90"/>
        <end position="107"/>
    </location>
</feature>
<feature type="strand" evidence="13">
    <location>
        <begin position="114"/>
        <end position="119"/>
    </location>
</feature>
<feature type="helix" evidence="13">
    <location>
        <begin position="124"/>
        <end position="126"/>
    </location>
</feature>
<feature type="helix" evidence="13">
    <location>
        <begin position="131"/>
        <end position="140"/>
    </location>
</feature>
<feature type="strand" evidence="13">
    <location>
        <begin position="145"/>
        <end position="147"/>
    </location>
</feature>
<feature type="helix" evidence="13">
    <location>
        <begin position="153"/>
        <end position="167"/>
    </location>
</feature>
<proteinExistence type="evidence at protein level"/>
<gene>
    <name evidence="7 9" type="primary">Rheb</name>
</gene>
<comment type="function">
    <text evidence="1 2 3 4 6">Small GTPase that acts as an allosteric activator of the canonical mTORC1 complex, an evolutionarily conserved central nutrient sensor that stimulates anabolic reactions and macromolecule biosynthesis to promote cellular biomass generation and growth (PubMed:12820960, PubMed:16631613, PubMed:21321084, PubMed:24648513). In response to nutrients, growth factors or amino acids, specifically activates the protein kinase activity of MTOR, the catalytic component of the mTORC1 complex: acts by causing a conformational change that allows the alignment of residues in the active site of MTOR, thereby enhancing the phosphorylation of ribosomal protein S6 kinase (RPS6KB1 and RPS6KB2) and EIF4EBP1 (4E-BP1) (By similarity). RHEB is also required for localization of the TSC-TBC complex to lysosomal membranes (By similarity). In response to starvation, RHEB is inactivated by the TSC-TBC complex, preventing activation of mTORC1 (By similarity). Has low intrinsic GTPase activity (By similarity).</text>
</comment>
<comment type="catalytic activity">
    <reaction evidence="1">
        <text>GTP + H2O = GDP + phosphate + H(+)</text>
        <dbReference type="Rhea" id="RHEA:19669"/>
        <dbReference type="ChEBI" id="CHEBI:15377"/>
        <dbReference type="ChEBI" id="CHEBI:15378"/>
        <dbReference type="ChEBI" id="CHEBI:37565"/>
        <dbReference type="ChEBI" id="CHEBI:43474"/>
        <dbReference type="ChEBI" id="CHEBI:58189"/>
    </reaction>
    <physiologicalReaction direction="left-to-right" evidence="1">
        <dbReference type="Rhea" id="RHEA:19670"/>
    </physiologicalReaction>
</comment>
<comment type="activity regulation">
    <text evidence="1 2 6">Alternates between an inactive form bound to GDP and an active form bound to GTP (PubMed:24648513). Inactivated by the TSC-TBC complex via the GTPase activating protein (GAP) domain of TSC2 (PubMed:12820960). Autoinhibited by Tyr-35, which constrains the active site conformation, restricting the access of the catalytic Asp-65 to the nucleotide-binding pocket (By similarity).</text>
</comment>
<comment type="subunit">
    <text evidence="1">Associates with the mTORC1 complex (MTOR, MLST8 and RPTOR) in a guanyl nucleotide-independent manner (By similarity). Interacts with TSC2 (By similarity). Interacts with MCRS1; the interaction maintains RHEB at the lysosome in its active GTP-bound form and prevents its interaction with the mTORC1 complex inhibitor TSC2, ensuring activation of the mTORC1 complex by RHEB (By similarity). Interacts (when prenylated) with PDE6D; this promotes release from membranes (By similarity).</text>
</comment>
<comment type="subcellular location">
    <subcellularLocation>
        <location evidence="3">Endomembrane system</location>
        <topology evidence="3">Lipid-anchor</topology>
        <orientation evidence="3">Cytoplasmic side</orientation>
    </subcellularLocation>
    <subcellularLocation>
        <location evidence="3">Lysosome membrane</location>
        <topology evidence="3">Lipid-anchor</topology>
        <orientation evidence="3">Cytoplasmic side</orientation>
    </subcellularLocation>
    <subcellularLocation>
        <location evidence="3">Golgi apparatus membrane</location>
        <topology evidence="3">Lipid-anchor</topology>
        <orientation evidence="3">Cytoplasmic side</orientation>
    </subcellularLocation>
    <subcellularLocation>
        <location evidence="1">Endoplasmic reticulum membrane</location>
        <topology evidence="1">Lipid-anchor</topology>
        <orientation evidence="1">Cytoplasmic side</orientation>
    </subcellularLocation>
    <subcellularLocation>
        <location evidence="1">Cytoplasm</location>
        <location evidence="1">Cytosol</location>
    </subcellularLocation>
    <text evidence="3">Farnesylation is required for localization to endomembrane system.</text>
</comment>
<comment type="PTM">
    <text evidence="3">Farnesylation is important for efficiently activating mTORC1-mediated signaling.</text>
</comment>
<comment type="PTM">
    <text evidence="1">Polyubiquitinated in response to amino acid, promoting its interaction with MTOR and mTORC1 activation. Deubiquitination by ATXN3 promotes recruitment of the TSC-TBC complex and RHEB inactivation by TSC2. Monoubiquitinated at Lys-8 by RNF152, promoting its association with the TSC-TBC complex. Deubiquitinated at Lys-8 by USP4, promoting mTORC1 activation.</text>
</comment>
<comment type="PTM">
    <text evidence="5">Phosphorylation by MAPKAPK5 impairs GTP-binding and inactivation.</text>
</comment>
<comment type="disruption phenotype">
    <text evidence="4">Embryonic lethality around midgestation (PubMed:21321084). The inner cell mass differentiates normally, but embryos do not develop beyond 12 dpc embryos, due to impaired development of the cardiovascular system (PubMed:21321084).</text>
</comment>
<comment type="miscellaneous">
    <text evidence="1">The conserved catalytic Gln-64 found in other Ras-like GTPases seems not to be involved in GTP hydrolysis in RHEB.</text>
</comment>
<comment type="similarity">
    <text evidence="8">Belongs to the small GTPase superfamily. Rheb family.</text>
</comment>
<organism>
    <name type="scientific">Mus musculus</name>
    <name type="common">Mouse</name>
    <dbReference type="NCBI Taxonomy" id="10090"/>
    <lineage>
        <taxon>Eukaryota</taxon>
        <taxon>Metazoa</taxon>
        <taxon>Chordata</taxon>
        <taxon>Craniata</taxon>
        <taxon>Vertebrata</taxon>
        <taxon>Euteleostomi</taxon>
        <taxon>Mammalia</taxon>
        <taxon>Eutheria</taxon>
        <taxon>Euarchontoglires</taxon>
        <taxon>Glires</taxon>
        <taxon>Rodentia</taxon>
        <taxon>Myomorpha</taxon>
        <taxon>Muroidea</taxon>
        <taxon>Muridae</taxon>
        <taxon>Murinae</taxon>
        <taxon>Mus</taxon>
        <taxon>Mus</taxon>
    </lineage>
</organism>
<reference key="1">
    <citation type="journal article" date="2004" name="Genome Res.">
        <title>The status, quality, and expansion of the NIH full-length cDNA project: the Mammalian Gene Collection (MGC).</title>
        <authorList>
            <consortium name="The MGC Project Team"/>
        </authorList>
    </citation>
    <scope>NUCLEOTIDE SEQUENCE [LARGE SCALE MRNA]</scope>
</reference>
<reference key="2">
    <citation type="journal article" date="2003" name="Mol. Cell">
        <title>Insulin activation of Rheb, a mediator of mTOR/S6K/4E-BP signaling, is inhibited by TSC1 and 2.</title>
        <authorList>
            <person name="Garami A."/>
            <person name="Zwartkruis F.J."/>
            <person name="Nobukuni T."/>
            <person name="Joaquin M."/>
            <person name="Roccio M."/>
            <person name="Stocker H."/>
            <person name="Kozma S.C."/>
            <person name="Hafen E."/>
            <person name="Bos J.L."/>
            <person name="Thomas G."/>
        </authorList>
    </citation>
    <scope>FUNCTION</scope>
    <scope>ACTIVITY REGULATION</scope>
</reference>
<reference key="3">
    <citation type="journal article" date="2006" name="Biochem. Biophys. Res. Commun.">
        <title>Localization of Rheb to the endomembrane is critical for its signaling function.</title>
        <authorList>
            <person name="Buerger C."/>
            <person name="DeVries B."/>
            <person name="Stambolic V."/>
        </authorList>
    </citation>
    <scope>FUNCTION</scope>
    <scope>SUBCELLULAR LOCATION</scope>
    <scope>ISOPRENYLATION AT CYS-181</scope>
    <scope>METHYLATION AT CYS-181</scope>
    <scope>MUTAGENESIS OF GLN-64; SER-180; CYS-181 AND MET-184</scope>
</reference>
<reference key="4">
    <citation type="journal article" date="2010" name="Cell">
        <title>A tissue-specific atlas of mouse protein phosphorylation and expression.</title>
        <authorList>
            <person name="Huttlin E.L."/>
            <person name="Jedrychowski M.P."/>
            <person name="Elias J.E."/>
            <person name="Goswami T."/>
            <person name="Rad R."/>
            <person name="Beausoleil S.A."/>
            <person name="Villen J."/>
            <person name="Haas W."/>
            <person name="Sowa M.E."/>
            <person name="Gygi S.P."/>
        </authorList>
    </citation>
    <scope>IDENTIFICATION BY MASS SPECTROMETRY [LARGE SCALE ANALYSIS]</scope>
    <source>
        <tissue>Brain</tissue>
        <tissue>Brown adipose tissue</tissue>
        <tissue>Heart</tissue>
        <tissue>Kidney</tissue>
        <tissue>Liver</tissue>
        <tissue>Lung</tissue>
        <tissue>Pancreas</tissue>
        <tissue>Spleen</tissue>
        <tissue>Testis</tissue>
    </source>
</reference>
<reference key="5">
    <citation type="journal article" date="2011" name="Mol. Cell. Biol.">
        <title>Rheb is essential for murine development.</title>
        <authorList>
            <person name="Goorden S.M."/>
            <person name="Hoogeveen-Westerveld M."/>
            <person name="Cheng C."/>
            <person name="van Woerden G.M."/>
            <person name="Mozaffari M."/>
            <person name="Post L."/>
            <person name="Duckers H.J."/>
            <person name="Nellist M."/>
            <person name="Elgersma Y."/>
        </authorList>
    </citation>
    <scope>FUNCTION</scope>
    <scope>DISRUPTION PHENOTYPE</scope>
</reference>
<reference key="6">
    <citation type="journal article" date="2011" name="Nat. Cell Biol.">
        <title>Inactivation of Rheb by PRAK-mediated phosphorylation is essential for energy-depletion-induced suppression of mTORC1.</title>
        <authorList>
            <person name="Zheng M."/>
            <person name="Wang Y.H."/>
            <person name="Wu X.N."/>
            <person name="Wu S.Q."/>
            <person name="Lu B.J."/>
            <person name="Dong M.Q."/>
            <person name="Zhang H."/>
            <person name="Sun P."/>
            <person name="Lin S.C."/>
            <person name="Guan K.L."/>
            <person name="Han J."/>
        </authorList>
    </citation>
    <scope>PHOSPHORYLATION AT SER-130</scope>
    <scope>MUTAGENESIS OF SER-130</scope>
</reference>
<reference evidence="10 11 12" key="7">
    <citation type="journal article" date="2014" name="J. Biol. Chem.">
        <title>Structure-guided mutation of the conserved G3-box glycine in Rheb generates a constitutively activated regulator of mammalian target of rapamycin (mTOR).</title>
        <authorList>
            <person name="Mazhab-Jafari M.T."/>
            <person name="Marshall C.B."/>
            <person name="Ho J."/>
            <person name="Ishiyama N."/>
            <person name="Stambolic V."/>
            <person name="Ikura M."/>
        </authorList>
    </citation>
    <scope>X-RAY CRYSTALLOGRAPHY (2.20 ANGSTROMS) OF 1-169 IN COMPLEX WITH GDP; GTP AND MAGNESIUM</scope>
    <scope>FUNCTION</scope>
    <scope>ACTIVITY REGULATION</scope>
    <scope>MUTAGENESIS OF GLY-63</scope>
</reference>
<keyword id="KW-0002">3D-structure</keyword>
<keyword id="KW-0963">Cytoplasm</keyword>
<keyword id="KW-0256">Endoplasmic reticulum</keyword>
<keyword id="KW-0333">Golgi apparatus</keyword>
<keyword id="KW-0342">GTP-binding</keyword>
<keyword id="KW-0378">Hydrolase</keyword>
<keyword id="KW-1017">Isopeptide bond</keyword>
<keyword id="KW-0449">Lipoprotein</keyword>
<keyword id="KW-0458">Lysosome</keyword>
<keyword id="KW-0460">Magnesium</keyword>
<keyword id="KW-0472">Membrane</keyword>
<keyword id="KW-0479">Metal-binding</keyword>
<keyword id="KW-0488">Methylation</keyword>
<keyword id="KW-0547">Nucleotide-binding</keyword>
<keyword id="KW-0597">Phosphoprotein</keyword>
<keyword id="KW-0636">Prenylation</keyword>
<keyword id="KW-1185">Reference proteome</keyword>
<keyword id="KW-0832">Ubl conjugation</keyword>
<sequence length="184" mass="20451">MPQSKSRKIAILGYRSVGKSSLTIQFVEGQFVDSYDPTIENTFTKLITVNGQEYHLQLVDTAGQDEYSIFPQTYSIDINGYILVYSVTSIKSFEVIKVIHGKLLDMVGKVQIPIMLVGNKKDLHMERVISYEEGKALAESWNAAFLESSAKENQTAVDVFKRIILEAEKIDGAASQGKSSCSVM</sequence>